<protein>
    <recommendedName>
        <fullName evidence="1">Integration host factor subunit alpha</fullName>
        <shortName evidence="1">IHF-alpha</shortName>
    </recommendedName>
</protein>
<reference key="1">
    <citation type="journal article" date="2010" name="J. Bacteriol.">
        <title>The genetic basis of laboratory adaptation in Caulobacter crescentus.</title>
        <authorList>
            <person name="Marks M.E."/>
            <person name="Castro-Rojas C.M."/>
            <person name="Teiling C."/>
            <person name="Du L."/>
            <person name="Kapatral V."/>
            <person name="Walunas T.L."/>
            <person name="Crosson S."/>
        </authorList>
    </citation>
    <scope>NUCLEOTIDE SEQUENCE [LARGE SCALE GENOMIC DNA]</scope>
    <source>
        <strain>NA1000 / CB15N</strain>
    </source>
</reference>
<gene>
    <name evidence="1" type="primary">ihfA</name>
    <name evidence="1" type="synonym">himA</name>
    <name type="ordered locus">CCNA_01433</name>
</gene>
<proteinExistence type="inferred from homology"/>
<feature type="chain" id="PRO_1000190421" description="Integration host factor subunit alpha">
    <location>
        <begin position="1"/>
        <end position="100"/>
    </location>
</feature>
<sequence length="100" mass="10893">MKGATLTRADLCEAVHEEVGLTRQDCAGLVERTLDLVAEALEQGETVKLSGFGVFQVRAKRARMGRNPKTGEPAEIEPRRVIGFRASQVMKARIDRALGG</sequence>
<keyword id="KW-0233">DNA recombination</keyword>
<keyword id="KW-0238">DNA-binding</keyword>
<keyword id="KW-1185">Reference proteome</keyword>
<keyword id="KW-0804">Transcription</keyword>
<keyword id="KW-0805">Transcription regulation</keyword>
<keyword id="KW-0810">Translation regulation</keyword>
<dbReference type="EMBL" id="CP001340">
    <property type="protein sequence ID" value="ACL94898.1"/>
    <property type="molecule type" value="Genomic_DNA"/>
</dbReference>
<dbReference type="RefSeq" id="WP_010919247.1">
    <property type="nucleotide sequence ID" value="NC_011916.1"/>
</dbReference>
<dbReference type="RefSeq" id="YP_002516806.1">
    <property type="nucleotide sequence ID" value="NC_011916.1"/>
</dbReference>
<dbReference type="SMR" id="B8H546"/>
<dbReference type="GeneID" id="7330162"/>
<dbReference type="KEGG" id="ccs:CCNA_01433"/>
<dbReference type="PATRIC" id="fig|565050.3.peg.1418"/>
<dbReference type="HOGENOM" id="CLU_105066_1_1_5"/>
<dbReference type="OrthoDB" id="9804203at2"/>
<dbReference type="PhylomeDB" id="B8H546"/>
<dbReference type="Proteomes" id="UP000001364">
    <property type="component" value="Chromosome"/>
</dbReference>
<dbReference type="GO" id="GO:0005829">
    <property type="term" value="C:cytosol"/>
    <property type="evidence" value="ECO:0007669"/>
    <property type="project" value="TreeGrafter"/>
</dbReference>
<dbReference type="GO" id="GO:0003677">
    <property type="term" value="F:DNA binding"/>
    <property type="evidence" value="ECO:0007669"/>
    <property type="project" value="UniProtKB-UniRule"/>
</dbReference>
<dbReference type="GO" id="GO:0030527">
    <property type="term" value="F:structural constituent of chromatin"/>
    <property type="evidence" value="ECO:0007669"/>
    <property type="project" value="InterPro"/>
</dbReference>
<dbReference type="GO" id="GO:0006310">
    <property type="term" value="P:DNA recombination"/>
    <property type="evidence" value="ECO:0007669"/>
    <property type="project" value="UniProtKB-UniRule"/>
</dbReference>
<dbReference type="GO" id="GO:0009893">
    <property type="term" value="P:positive regulation of metabolic process"/>
    <property type="evidence" value="ECO:0007669"/>
    <property type="project" value="UniProtKB-ARBA"/>
</dbReference>
<dbReference type="GO" id="GO:0006355">
    <property type="term" value="P:regulation of DNA-templated transcription"/>
    <property type="evidence" value="ECO:0007669"/>
    <property type="project" value="UniProtKB-UniRule"/>
</dbReference>
<dbReference type="GO" id="GO:0006417">
    <property type="term" value="P:regulation of translation"/>
    <property type="evidence" value="ECO:0007669"/>
    <property type="project" value="UniProtKB-UniRule"/>
</dbReference>
<dbReference type="CDD" id="cd13835">
    <property type="entry name" value="IHF_A"/>
    <property type="match status" value="1"/>
</dbReference>
<dbReference type="Gene3D" id="4.10.520.10">
    <property type="entry name" value="IHF-like DNA-binding proteins"/>
    <property type="match status" value="1"/>
</dbReference>
<dbReference type="HAMAP" id="MF_00380">
    <property type="entry name" value="IHF_alpha"/>
    <property type="match status" value="1"/>
</dbReference>
<dbReference type="InterPro" id="IPR000119">
    <property type="entry name" value="Hist_DNA-bd"/>
</dbReference>
<dbReference type="InterPro" id="IPR020816">
    <property type="entry name" value="Histone-like_DNA-bd_CS"/>
</dbReference>
<dbReference type="InterPro" id="IPR010992">
    <property type="entry name" value="IHF-like_DNA-bd_dom_sf"/>
</dbReference>
<dbReference type="InterPro" id="IPR005684">
    <property type="entry name" value="IHF_alpha"/>
</dbReference>
<dbReference type="NCBIfam" id="NF001401">
    <property type="entry name" value="PRK00285.1"/>
    <property type="match status" value="1"/>
</dbReference>
<dbReference type="PANTHER" id="PTHR33175">
    <property type="entry name" value="DNA-BINDING PROTEIN HU"/>
    <property type="match status" value="1"/>
</dbReference>
<dbReference type="PANTHER" id="PTHR33175:SF2">
    <property type="entry name" value="INTEGRATION HOST FACTOR SUBUNIT ALPHA"/>
    <property type="match status" value="1"/>
</dbReference>
<dbReference type="Pfam" id="PF00216">
    <property type="entry name" value="Bac_DNA_binding"/>
    <property type="match status" value="1"/>
</dbReference>
<dbReference type="PRINTS" id="PR01727">
    <property type="entry name" value="DNABINDINGHU"/>
</dbReference>
<dbReference type="SMART" id="SM00411">
    <property type="entry name" value="BHL"/>
    <property type="match status" value="1"/>
</dbReference>
<dbReference type="SUPFAM" id="SSF47729">
    <property type="entry name" value="IHF-like DNA-binding proteins"/>
    <property type="match status" value="1"/>
</dbReference>
<dbReference type="PROSITE" id="PS00045">
    <property type="entry name" value="HISTONE_LIKE"/>
    <property type="match status" value="1"/>
</dbReference>
<accession>B8H546</accession>
<name>IHFA_CAUVN</name>
<comment type="function">
    <text evidence="1">This protein is one of the two subunits of integration host factor, a specific DNA-binding protein that functions in genetic recombination as well as in transcriptional and translational control.</text>
</comment>
<comment type="subunit">
    <text evidence="1">Heterodimer of an alpha and a beta chain.</text>
</comment>
<comment type="similarity">
    <text evidence="1">Belongs to the bacterial histone-like protein family.</text>
</comment>
<evidence type="ECO:0000255" key="1">
    <source>
        <dbReference type="HAMAP-Rule" id="MF_00380"/>
    </source>
</evidence>
<organism>
    <name type="scientific">Caulobacter vibrioides (strain NA1000 / CB15N)</name>
    <name type="common">Caulobacter crescentus</name>
    <dbReference type="NCBI Taxonomy" id="565050"/>
    <lineage>
        <taxon>Bacteria</taxon>
        <taxon>Pseudomonadati</taxon>
        <taxon>Pseudomonadota</taxon>
        <taxon>Alphaproteobacteria</taxon>
        <taxon>Caulobacterales</taxon>
        <taxon>Caulobacteraceae</taxon>
        <taxon>Caulobacter</taxon>
    </lineage>
</organism>